<protein>
    <recommendedName>
        <fullName>Glycine-rich protein A3</fullName>
    </recommendedName>
</protein>
<organism>
    <name type="scientific">Daucus carota</name>
    <name type="common">Wild carrot</name>
    <dbReference type="NCBI Taxonomy" id="4039"/>
    <lineage>
        <taxon>Eukaryota</taxon>
        <taxon>Viridiplantae</taxon>
        <taxon>Streptophyta</taxon>
        <taxon>Embryophyta</taxon>
        <taxon>Tracheophyta</taxon>
        <taxon>Spermatophyta</taxon>
        <taxon>Magnoliopsida</taxon>
        <taxon>eudicotyledons</taxon>
        <taxon>Gunneridae</taxon>
        <taxon>Pentapetalae</taxon>
        <taxon>asterids</taxon>
        <taxon>campanulids</taxon>
        <taxon>Apiales</taxon>
        <taxon>Apiaceae</taxon>
        <taxon>Apioideae</taxon>
        <taxon>Scandiceae</taxon>
        <taxon>Daucinae</taxon>
        <taxon>Daucus</taxon>
        <taxon>Daucus sect. Daucus</taxon>
    </lineage>
</organism>
<accession>P37705</accession>
<name>GRP3_DAUCA</name>
<sequence length="195" mass="19099">MGGGDGHNDQDKGLFSNLAGGLAGGGHYPPGQYPPAAGGYPPQGYPPAGGGYPPQGYPPAGGGYPPQGYPPAGGGYPPQGYPPAGHHSGSSAPHHSGHGGVAGMVAGGRAAAAAAYGVHHMTQGHGSHGGHGGYAHGAMGMMPGMGAMAMASSSTVSTVMESLSRESTGRARSTDTRSGSNLSFSISSRTFWATK</sequence>
<dbReference type="EMBL" id="X72383">
    <property type="protein sequence ID" value="CAA51076.1"/>
    <property type="molecule type" value="mRNA"/>
</dbReference>
<dbReference type="PIR" id="S32123">
    <property type="entry name" value="S32123"/>
</dbReference>
<dbReference type="PANTHER" id="PTHR31248">
    <property type="entry name" value="DOMAIN PROTEIN, PUTATIVE (AFU_ORTHOLOGUE AFUA_5G04290)-RELATED"/>
    <property type="match status" value="1"/>
</dbReference>
<dbReference type="PANTHER" id="PTHR31248:SF2">
    <property type="entry name" value="DOMAIN PROTEIN, PUTATIVE (AFU_ORTHOLOGUE AFUA_5G04290)-RELATED"/>
    <property type="match status" value="1"/>
</dbReference>
<evidence type="ECO:0000256" key="1">
    <source>
        <dbReference type="SAM" id="MobiDB-lite"/>
    </source>
</evidence>
<feature type="chain" id="PRO_0000083857" description="Glycine-rich protein A3">
    <location>
        <begin position="1"/>
        <end position="195"/>
    </location>
</feature>
<feature type="region of interest" description="Disordered" evidence="1">
    <location>
        <begin position="23"/>
        <end position="103"/>
    </location>
</feature>
<feature type="region of interest" description="Disordered" evidence="1">
    <location>
        <begin position="159"/>
        <end position="182"/>
    </location>
</feature>
<feature type="compositionally biased region" description="Gly residues" evidence="1">
    <location>
        <begin position="47"/>
        <end position="77"/>
    </location>
</feature>
<feature type="compositionally biased region" description="Low complexity" evidence="1">
    <location>
        <begin position="82"/>
        <end position="94"/>
    </location>
</feature>
<feature type="compositionally biased region" description="Basic and acidic residues" evidence="1">
    <location>
        <begin position="163"/>
        <end position="175"/>
    </location>
</feature>
<proteinExistence type="evidence at transcript level"/>
<reference key="1">
    <citation type="submission" date="1993-03" db="EMBL/GenBank/DDBJ databases">
        <authorList>
            <person name="Schrader S."/>
            <person name="Kaldenhoff R."/>
            <person name="Richter G."/>
        </authorList>
    </citation>
    <scope>NUCLEOTIDE SEQUENCE [MRNA]</scope>
</reference>